<feature type="chain" id="PRO_0000073171" description="Ovomucoid">
    <location>
        <begin position="1" status="less than"/>
        <end position="56" status="greater than"/>
    </location>
</feature>
<feature type="domain" description="Kazal-like" evidence="1">
    <location>
        <begin position="6"/>
        <end position="56"/>
    </location>
</feature>
<feature type="site" description="Reactive bond 3">
    <location>
        <begin position="18"/>
        <end position="19"/>
    </location>
</feature>
<feature type="glycosylation site" description="N-linked (GlcNAc...) asparagine">
    <location>
        <position position="45"/>
    </location>
</feature>
<feature type="disulfide bond">
    <location>
        <begin position="8"/>
        <end position="38"/>
    </location>
</feature>
<feature type="disulfide bond">
    <location>
        <begin position="16"/>
        <end position="35"/>
    </location>
</feature>
<feature type="disulfide bond">
    <location>
        <begin position="24"/>
        <end position="56"/>
    </location>
</feature>
<feature type="non-terminal residue">
    <location>
        <position position="1"/>
    </location>
</feature>
<feature type="non-terminal residue">
    <location>
        <position position="56"/>
    </location>
</feature>
<name>IOVO_PUCMA</name>
<keyword id="KW-0903">Direct protein sequencing</keyword>
<keyword id="KW-1015">Disulfide bond</keyword>
<keyword id="KW-0325">Glycoprotein</keyword>
<keyword id="KW-0646">Protease inhibitor</keyword>
<keyword id="KW-0677">Repeat</keyword>
<keyword id="KW-0964">Secreted</keyword>
<keyword id="KW-0722">Serine protease inhibitor</keyword>
<reference key="1">
    <citation type="journal article" date="1987" name="Biochemistry">
        <title>Ovomucoid third domains from 100 avian species: isolation, sequences, and hypervariability of enzyme-inhibitor contact residues.</title>
        <authorList>
            <person name="Laskowski M. Jr."/>
            <person name="Kato I."/>
            <person name="Ardelt W."/>
            <person name="Cook J."/>
            <person name="Denton A."/>
            <person name="Empie M.W."/>
            <person name="Kohr W.J."/>
            <person name="Park S.J."/>
            <person name="Parks K."/>
            <person name="Schatzley B.L."/>
            <person name="Schoenberger O.L."/>
            <person name="Tashiro M."/>
            <person name="Vichot G."/>
            <person name="Whatley H.E."/>
            <person name="Wieczorek A."/>
            <person name="Wieczorek M."/>
        </authorList>
    </citation>
    <scope>PROTEIN SEQUENCE</scope>
</reference>
<evidence type="ECO:0000255" key="1">
    <source>
        <dbReference type="PROSITE-ProRule" id="PRU00798"/>
    </source>
</evidence>
<accession>P67956</accession>
<accession>P05586</accession>
<organism>
    <name type="scientific">Pucrasia macrolopha</name>
    <name type="common">Koklass pheasant</name>
    <name type="synonym">Satyra macrolopha</name>
    <dbReference type="NCBI Taxonomy" id="9061"/>
    <lineage>
        <taxon>Eukaryota</taxon>
        <taxon>Metazoa</taxon>
        <taxon>Chordata</taxon>
        <taxon>Craniata</taxon>
        <taxon>Vertebrata</taxon>
        <taxon>Euteleostomi</taxon>
        <taxon>Archelosauria</taxon>
        <taxon>Archosauria</taxon>
        <taxon>Dinosauria</taxon>
        <taxon>Saurischia</taxon>
        <taxon>Theropoda</taxon>
        <taxon>Coelurosauria</taxon>
        <taxon>Aves</taxon>
        <taxon>Neognathae</taxon>
        <taxon>Galloanserae</taxon>
        <taxon>Galliformes</taxon>
        <taxon>Phasianidae</taxon>
        <taxon>Phasianinae</taxon>
        <taxon>Pucrasia</taxon>
    </lineage>
</organism>
<protein>
    <recommendedName>
        <fullName>Ovomucoid</fullName>
    </recommendedName>
</protein>
<comment type="subcellular location">
    <subcellularLocation>
        <location>Secreted</location>
    </subcellularLocation>
</comment>
<comment type="domain">
    <text>Avian ovomucoid consists of three homologous, tandem Kazal family inhibitory domains.</text>
</comment>
<dbReference type="SMR" id="P67956"/>
<dbReference type="GO" id="GO:0005615">
    <property type="term" value="C:extracellular space"/>
    <property type="evidence" value="ECO:0007669"/>
    <property type="project" value="UniProtKB-ARBA"/>
</dbReference>
<dbReference type="GO" id="GO:0004867">
    <property type="term" value="F:serine-type endopeptidase inhibitor activity"/>
    <property type="evidence" value="ECO:0007669"/>
    <property type="project" value="UniProtKB-KW"/>
</dbReference>
<dbReference type="CDD" id="cd00104">
    <property type="entry name" value="KAZAL_FS"/>
    <property type="match status" value="1"/>
</dbReference>
<dbReference type="FunFam" id="3.30.60.30:FF:000037">
    <property type="entry name" value="Ovomucoid"/>
    <property type="match status" value="1"/>
</dbReference>
<dbReference type="Gene3D" id="3.30.60.30">
    <property type="match status" value="1"/>
</dbReference>
<dbReference type="InterPro" id="IPR051597">
    <property type="entry name" value="Bifunctional_prot_inhibitor"/>
</dbReference>
<dbReference type="InterPro" id="IPR002350">
    <property type="entry name" value="Kazal_dom"/>
</dbReference>
<dbReference type="InterPro" id="IPR036058">
    <property type="entry name" value="Kazal_dom_sf"/>
</dbReference>
<dbReference type="InterPro" id="IPR001239">
    <property type="entry name" value="Prot_inh_Kazal-m"/>
</dbReference>
<dbReference type="PANTHER" id="PTHR47729:SF1">
    <property type="entry name" value="OVOMUCOID-LIKE-RELATED"/>
    <property type="match status" value="1"/>
</dbReference>
<dbReference type="PANTHER" id="PTHR47729">
    <property type="entry name" value="SERINE PEPTIDASE INHIBITOR, KAZAL TYPE 2, TANDEM DUPLICATE 1-RELATED"/>
    <property type="match status" value="1"/>
</dbReference>
<dbReference type="Pfam" id="PF00050">
    <property type="entry name" value="Kazal_1"/>
    <property type="match status" value="1"/>
</dbReference>
<dbReference type="PRINTS" id="PR00290">
    <property type="entry name" value="KAZALINHBTR"/>
</dbReference>
<dbReference type="SMART" id="SM00280">
    <property type="entry name" value="KAZAL"/>
    <property type="match status" value="1"/>
</dbReference>
<dbReference type="SUPFAM" id="SSF100895">
    <property type="entry name" value="Kazal-type serine protease inhibitors"/>
    <property type="match status" value="1"/>
</dbReference>
<dbReference type="PROSITE" id="PS00282">
    <property type="entry name" value="KAZAL_1"/>
    <property type="match status" value="1"/>
</dbReference>
<dbReference type="PROSITE" id="PS51465">
    <property type="entry name" value="KAZAL_2"/>
    <property type="match status" value="1"/>
</dbReference>
<proteinExistence type="evidence at protein level"/>
<sequence length="56" mass="6039">LAAVSVDCSEYPKPACTMEYRPLCGSDNKTYGNKCNFCNAVVESNGTLTLSHFGKC</sequence>